<dbReference type="EC" id="3.1.26.-" evidence="2"/>
<dbReference type="EMBL" id="AK042626">
    <property type="protein sequence ID" value="BAC31310.1"/>
    <property type="molecule type" value="mRNA"/>
</dbReference>
<dbReference type="EMBL" id="AK084548">
    <property type="protein sequence ID" value="BAC39216.1"/>
    <property type="status" value="ALT_SEQ"/>
    <property type="molecule type" value="mRNA"/>
</dbReference>
<dbReference type="EMBL" id="AK170595">
    <property type="protein sequence ID" value="BAE41901.1"/>
    <property type="molecule type" value="mRNA"/>
</dbReference>
<dbReference type="EMBL" id="AK172181">
    <property type="protein sequence ID" value="BAE42869.1"/>
    <property type="molecule type" value="mRNA"/>
</dbReference>
<dbReference type="EMBL" id="AL645911">
    <property type="status" value="NOT_ANNOTATED_CDS"/>
    <property type="molecule type" value="Genomic_DNA"/>
</dbReference>
<dbReference type="EMBL" id="CH466558">
    <property type="protein sequence ID" value="EDL34709.1"/>
    <property type="molecule type" value="Genomic_DNA"/>
</dbReference>
<dbReference type="EMBL" id="BC056486">
    <property type="protein sequence ID" value="AAH56486.1"/>
    <property type="molecule type" value="mRNA"/>
</dbReference>
<dbReference type="CCDS" id="CCDS25718.1">
    <molecule id="Q8C9A2-1"/>
</dbReference>
<dbReference type="CCDS" id="CCDS48999.1">
    <molecule id="Q8C9A2-3"/>
</dbReference>
<dbReference type="RefSeq" id="NP_001158108.1">
    <molecule id="Q8C9A2-3"/>
    <property type="nucleotide sequence ID" value="NM_001164636.1"/>
</dbReference>
<dbReference type="RefSeq" id="NP_796368.1">
    <molecule id="Q8C9A2-1"/>
    <property type="nucleotide sequence ID" value="NM_177394.3"/>
</dbReference>
<dbReference type="PDB" id="5AOY">
    <property type="method" value="X-ray"/>
    <property type="resolution" value="1.75 A"/>
    <property type="chains" value="A=1-250"/>
</dbReference>
<dbReference type="PDB" id="6OZJ">
    <property type="method" value="X-ray"/>
    <property type="resolution" value="2.25 A"/>
    <property type="chains" value="A/B=1-253"/>
</dbReference>
<dbReference type="PDB" id="6OZK">
    <property type="method" value="X-ray"/>
    <property type="resolution" value="2.10 A"/>
    <property type="chains" value="A/B=6-250"/>
</dbReference>
<dbReference type="PDB" id="6OZL">
    <property type="method" value="X-ray"/>
    <property type="resolution" value="2.10 A"/>
    <property type="chains" value="A/B=1-253"/>
</dbReference>
<dbReference type="PDB" id="6OZM">
    <property type="method" value="X-ray"/>
    <property type="resolution" value="2.15 A"/>
    <property type="chains" value="A/B=1-253"/>
</dbReference>
<dbReference type="PDB" id="6OZN">
    <property type="method" value="X-ray"/>
    <property type="resolution" value="1.90 A"/>
    <property type="chains" value="A/B=1-253"/>
</dbReference>
<dbReference type="PDB" id="6OZO">
    <property type="method" value="X-ray"/>
    <property type="resolution" value="2.23 A"/>
    <property type="chains" value="A/B=1-253"/>
</dbReference>
<dbReference type="PDB" id="6OZP">
    <property type="method" value="X-ray"/>
    <property type="resolution" value="1.96 A"/>
    <property type="chains" value="A/B=8-252"/>
</dbReference>
<dbReference type="PDB" id="6OZQ">
    <property type="method" value="X-ray"/>
    <property type="resolution" value="2.15 A"/>
    <property type="chains" value="A/B=1-253"/>
</dbReference>
<dbReference type="PDB" id="6OZR">
    <property type="method" value="X-ray"/>
    <property type="resolution" value="2.15 A"/>
    <property type="chains" value="A/B=1-253"/>
</dbReference>
<dbReference type="PDB" id="6OZS">
    <property type="method" value="X-ray"/>
    <property type="resolution" value="2.41 A"/>
    <property type="chains" value="A/B=6-252"/>
</dbReference>
<dbReference type="PDBsum" id="5AOY"/>
<dbReference type="PDBsum" id="6OZJ"/>
<dbReference type="PDBsum" id="6OZK"/>
<dbReference type="PDBsum" id="6OZL"/>
<dbReference type="PDBsum" id="6OZM"/>
<dbReference type="PDBsum" id="6OZN"/>
<dbReference type="PDBsum" id="6OZO"/>
<dbReference type="PDBsum" id="6OZP"/>
<dbReference type="PDBsum" id="6OZQ"/>
<dbReference type="PDBsum" id="6OZR"/>
<dbReference type="PDBsum" id="6OZS"/>
<dbReference type="SMR" id="Q8C9A2"/>
<dbReference type="FunCoup" id="Q8C9A2">
    <property type="interactions" value="1564"/>
</dbReference>
<dbReference type="STRING" id="10090.ENSMUSP00000101851"/>
<dbReference type="PhosphoSitePlus" id="Q8C9A2"/>
<dbReference type="PaxDb" id="10090-ENSMUSP00000101851"/>
<dbReference type="ProteomicsDB" id="277834">
    <molecule id="Q8C9A2-3"/>
</dbReference>
<dbReference type="ProteomicsDB" id="277835">
    <molecule id="Q8C9A2-1"/>
</dbReference>
<dbReference type="Antibodypedia" id="32763">
    <property type="antibodies" value="22 antibodies from 10 providers"/>
</dbReference>
<dbReference type="Ensembl" id="ENSMUST00000106244.9">
    <molecule id="Q8C9A2-3"/>
    <property type="protein sequence ID" value="ENSMUSP00000101851.3"/>
    <property type="gene ID" value="ENSMUSG00000039850.17"/>
</dbReference>
<dbReference type="Ensembl" id="ENSMUST00000106245.9">
    <molecule id="Q8C9A2-1"/>
    <property type="protein sequence ID" value="ENSMUSP00000132755.2"/>
    <property type="gene ID" value="ENSMUSG00000039850.17"/>
</dbReference>
<dbReference type="Ensembl" id="ENSMUST00000129327.9">
    <molecule id="Q8C9A2-1"/>
    <property type="protein sequence ID" value="ENSMUSP00000119599.3"/>
    <property type="gene ID" value="ENSMUSG00000039850.17"/>
</dbReference>
<dbReference type="GeneID" id="338371"/>
<dbReference type="KEGG" id="mmu:338371"/>
<dbReference type="UCSC" id="uc007mqt.2">
    <molecule id="Q8C9A2-3"/>
    <property type="organism name" value="mouse"/>
</dbReference>
<dbReference type="AGR" id="MGI:2444688"/>
<dbReference type="CTD" id="284131"/>
<dbReference type="MGI" id="MGI:2444688">
    <property type="gene designation" value="Endov"/>
</dbReference>
<dbReference type="VEuPathDB" id="HostDB:ENSMUSG00000039850"/>
<dbReference type="eggNOG" id="KOG4417">
    <property type="taxonomic scope" value="Eukaryota"/>
</dbReference>
<dbReference type="GeneTree" id="ENSGT00390000011880"/>
<dbReference type="InParanoid" id="Q8C9A2"/>
<dbReference type="OrthoDB" id="20018at2759"/>
<dbReference type="PhylomeDB" id="Q8C9A2"/>
<dbReference type="TreeFam" id="TF300065"/>
<dbReference type="BRENDA" id="3.1.21.7">
    <property type="organism ID" value="3474"/>
</dbReference>
<dbReference type="BioGRID-ORCS" id="338371">
    <property type="hits" value="3 hits in 112 CRISPR screens"/>
</dbReference>
<dbReference type="ChiTaRS" id="Endov">
    <property type="organism name" value="mouse"/>
</dbReference>
<dbReference type="PRO" id="PR:Q8C9A2"/>
<dbReference type="Proteomes" id="UP000000589">
    <property type="component" value="Chromosome 11"/>
</dbReference>
<dbReference type="RNAct" id="Q8C9A2">
    <property type="molecule type" value="protein"/>
</dbReference>
<dbReference type="Bgee" id="ENSMUSG00000039850">
    <property type="expression patterns" value="Expressed in embryonic brain and 113 other cell types or tissues"/>
</dbReference>
<dbReference type="ExpressionAtlas" id="Q8C9A2">
    <property type="expression patterns" value="baseline and differential"/>
</dbReference>
<dbReference type="GO" id="GO:0005737">
    <property type="term" value="C:cytoplasm"/>
    <property type="evidence" value="ECO:0000250"/>
    <property type="project" value="UniProtKB"/>
</dbReference>
<dbReference type="GO" id="GO:0010494">
    <property type="term" value="C:cytoplasmic stress granule"/>
    <property type="evidence" value="ECO:0000250"/>
    <property type="project" value="UniProtKB"/>
</dbReference>
<dbReference type="GO" id="GO:0005730">
    <property type="term" value="C:nucleolus"/>
    <property type="evidence" value="ECO:0000250"/>
    <property type="project" value="UniProtKB"/>
</dbReference>
<dbReference type="GO" id="GO:0003677">
    <property type="term" value="F:DNA binding"/>
    <property type="evidence" value="ECO:0000250"/>
    <property type="project" value="UniProtKB"/>
</dbReference>
<dbReference type="GO" id="GO:0016888">
    <property type="term" value="F:endodeoxyribonuclease activity, producing 5'-phosphomonoesters"/>
    <property type="evidence" value="ECO:0000314"/>
    <property type="project" value="UniProtKB"/>
</dbReference>
<dbReference type="GO" id="GO:0000287">
    <property type="term" value="F:magnesium ion binding"/>
    <property type="evidence" value="ECO:0000314"/>
    <property type="project" value="UniProtKB"/>
</dbReference>
<dbReference type="GO" id="GO:0016891">
    <property type="term" value="F:RNA endonuclease activity, producing 5'-phosphomonoesters"/>
    <property type="evidence" value="ECO:0000250"/>
    <property type="project" value="UniProtKB"/>
</dbReference>
<dbReference type="GO" id="GO:0003727">
    <property type="term" value="F:single-stranded RNA binding"/>
    <property type="evidence" value="ECO:0000250"/>
    <property type="project" value="UniProtKB"/>
</dbReference>
<dbReference type="GO" id="GO:0006281">
    <property type="term" value="P:DNA repair"/>
    <property type="evidence" value="ECO:0007669"/>
    <property type="project" value="InterPro"/>
</dbReference>
<dbReference type="CDD" id="cd06559">
    <property type="entry name" value="Endonuclease_V"/>
    <property type="match status" value="1"/>
</dbReference>
<dbReference type="FunFam" id="3.30.2170.10:FF:000002">
    <property type="entry name" value="Endonuclease V"/>
    <property type="match status" value="1"/>
</dbReference>
<dbReference type="Gene3D" id="3.30.2170.10">
    <property type="entry name" value="archaeoglobus fulgidus dsm 4304 superfamily"/>
    <property type="match status" value="1"/>
</dbReference>
<dbReference type="HAMAP" id="MF_00801">
    <property type="entry name" value="Endonuclease_5"/>
    <property type="match status" value="1"/>
</dbReference>
<dbReference type="InterPro" id="IPR007581">
    <property type="entry name" value="Endonuclease-V"/>
</dbReference>
<dbReference type="PANTHER" id="PTHR28511">
    <property type="entry name" value="ENDONUCLEASE V"/>
    <property type="match status" value="1"/>
</dbReference>
<dbReference type="PANTHER" id="PTHR28511:SF1">
    <property type="entry name" value="ENDONUCLEASE V"/>
    <property type="match status" value="1"/>
</dbReference>
<dbReference type="Pfam" id="PF04493">
    <property type="entry name" value="Endonuclease_5"/>
    <property type="match status" value="1"/>
</dbReference>
<organism>
    <name type="scientific">Mus musculus</name>
    <name type="common">Mouse</name>
    <dbReference type="NCBI Taxonomy" id="10090"/>
    <lineage>
        <taxon>Eukaryota</taxon>
        <taxon>Metazoa</taxon>
        <taxon>Chordata</taxon>
        <taxon>Craniata</taxon>
        <taxon>Vertebrata</taxon>
        <taxon>Euteleostomi</taxon>
        <taxon>Mammalia</taxon>
        <taxon>Eutheria</taxon>
        <taxon>Euarchontoglires</taxon>
        <taxon>Glires</taxon>
        <taxon>Rodentia</taxon>
        <taxon>Myomorpha</taxon>
        <taxon>Muroidea</taxon>
        <taxon>Muridae</taxon>
        <taxon>Murinae</taxon>
        <taxon>Mus</taxon>
        <taxon>Mus</taxon>
    </lineage>
</organism>
<protein>
    <recommendedName>
        <fullName>Endonuclease V</fullName>
        <ecNumber evidence="2">3.1.26.-</ecNumber>
    </recommendedName>
</protein>
<sequence length="338" mass="37174">MAHTAAERPPEETLSLWKGEQARLKARVVDRDTEAWQRDPSFSGLQKVGGVDVSFVKGDSVRACASLVVLSYPELKVVYEDSRMVGLKAPYVSGFLAFREVPFLVELVQRLQEKEPDLMPQVVLVDGNGVLHQRGFGVACHLGVLTELPCIGVAKKLLQVDGLENNALHKEKIVLLQAGGDTFPLIGSSGTVLGMALRSHDHSTKPLYVSVGHRISLEVAVRLTHHCCRFRIPEPIRQADIRSREYIRRTLGQLGVAPAQRKDRSQKEQRPNACPQGGPGALADQGRPPECDGRDSSSDRKAPEPGFQEQKDQQLEGTGHQEDSDLWPPSPAWVQSPP</sequence>
<comment type="function">
    <text evidence="2">Endoribonuclease that specifically cleaves inosine-containing RNAs: cleaves RNA at the second phosphodiester bond 3' to inosine. Active against both single-stranded and double-stranded RNAs. Has strong preference for single-stranded RNAs (ssRNAs) toward double-stranded RNAs (dsRNAs). Cleaves mRNAs and tRNAs containing inosine. Also able to cleave structure-specific dsRNA substrates containing the specific sites 5'-IIUI-3' and 5'-UIUU-3'. Inosine is present in a number of RNAs following editing; the function of inosine-specific endoribonuclease is still unclear: it could either play a regulatory role in edited RNAs, or be involved in antiviral response by removing the hyperedited long viral dsRNA genome that has undergone A-to-I editing. Binds branched DNA structures.</text>
</comment>
<comment type="cofactor">
    <cofactor evidence="4">
        <name>Mg(2+)</name>
        <dbReference type="ChEBI" id="CHEBI:18420"/>
    </cofactor>
</comment>
<comment type="subunit">
    <text evidence="2">Monomer. Interacts with PABPC1; the interaction is RNA-dependent and stimulates ENDOV activity.</text>
</comment>
<comment type="subcellular location">
    <subcellularLocation>
        <location evidence="2">Cytoplasm</location>
    </subcellularLocation>
    <subcellularLocation>
        <location evidence="2">Nucleus</location>
        <location evidence="2">Nucleolus</location>
    </subcellularLocation>
    <subcellularLocation>
        <location evidence="2">Cytoplasm</location>
        <location evidence="2">Stress granule</location>
    </subcellularLocation>
    <text evidence="2">Relocalizes to cytoplasmic stress granules upon cellular stress where it colocalizes with PABPC1.</text>
</comment>
<comment type="alternative products">
    <event type="alternative splicing"/>
    <isoform>
        <id>Q8C9A2-3</id>
        <name>1</name>
        <sequence type="displayed"/>
    </isoform>
    <isoform>
        <id>Q8C9A2-1</id>
        <name>2</name>
        <sequence type="described" ref="VSP_041579"/>
    </isoform>
</comment>
<comment type="tissue specificity">
    <text evidence="4">Highest levels detected in liver with high levels also found in heart, kidney and testis. Expressed at low levels in brain.</text>
</comment>
<comment type="similarity">
    <text evidence="7">Belongs to the endonuclease V family.</text>
</comment>
<comment type="caution">
    <text evidence="8">Was initially characterized as an endodeoxyribonuclease involved in DNA repair (PubMed:12853604). While it shows some weak endodeoxyribonuclease activity in vitro, such activity probably does not exist in vivo.</text>
</comment>
<comment type="sequence caution" evidence="7">
    <conflict type="miscellaneous discrepancy">
        <sequence resource="EMBL-CDS" id="BAC39216"/>
    </conflict>
    <text>Probable cloning artifact.</text>
</comment>
<keyword id="KW-0002">3D-structure</keyword>
<keyword id="KW-0025">Alternative splicing</keyword>
<keyword id="KW-0963">Cytoplasm</keyword>
<keyword id="KW-0238">DNA-binding</keyword>
<keyword id="KW-0255">Endonuclease</keyword>
<keyword id="KW-0378">Hydrolase</keyword>
<keyword id="KW-0460">Magnesium</keyword>
<keyword id="KW-0479">Metal-binding</keyword>
<keyword id="KW-0540">Nuclease</keyword>
<keyword id="KW-0539">Nucleus</keyword>
<keyword id="KW-1185">Reference proteome</keyword>
<keyword id="KW-0694">RNA-binding</keyword>
<feature type="chain" id="PRO_0000349224" description="Endonuclease V">
    <location>
        <begin position="1"/>
        <end position="338"/>
    </location>
</feature>
<feature type="region of interest" description="Disordered" evidence="3">
    <location>
        <begin position="253"/>
        <end position="338"/>
    </location>
</feature>
<feature type="compositionally biased region" description="Basic and acidic residues" evidence="3">
    <location>
        <begin position="260"/>
        <end position="270"/>
    </location>
</feature>
<feature type="compositionally biased region" description="Basic and acidic residues" evidence="3">
    <location>
        <begin position="287"/>
        <end position="323"/>
    </location>
</feature>
<feature type="compositionally biased region" description="Pro residues" evidence="3">
    <location>
        <begin position="328"/>
        <end position="338"/>
    </location>
</feature>
<feature type="binding site" evidence="1">
    <location>
        <position position="52"/>
    </location>
    <ligand>
        <name>Mg(2+)</name>
        <dbReference type="ChEBI" id="CHEBI:18420"/>
    </ligand>
</feature>
<feature type="binding site" evidence="1">
    <location>
        <position position="126"/>
    </location>
    <ligand>
        <name>Mg(2+)</name>
        <dbReference type="ChEBI" id="CHEBI:18420"/>
    </ligand>
</feature>
<feature type="site" description="Interaction with target DNA" evidence="1">
    <location>
        <position position="91"/>
    </location>
</feature>
<feature type="splice variant" id="VSP_041579" description="In isoform 2." evidence="5 6">
    <location>
        <begin position="1"/>
        <end position="83"/>
    </location>
</feature>
<feature type="mutagenesis site" description="No effect on activity." evidence="4">
    <original>S</original>
    <variation>P</variation>
    <location>
        <position position="93"/>
    </location>
</feature>
<feature type="mutagenesis site" description="No effect on activity." evidence="4">
    <original>Q</original>
    <variation>P</variation>
    <location>
        <position position="133"/>
    </location>
</feature>
<feature type="sequence conflict" description="In Ref. 2; BAE41901." evidence="7" ref="2">
    <original>Q</original>
    <variation>R</variation>
    <location>
        <position position="285"/>
    </location>
</feature>
<feature type="helix" evidence="9">
    <location>
        <begin position="10"/>
        <end position="25"/>
    </location>
</feature>
<feature type="helix" evidence="9">
    <location>
        <begin position="35"/>
        <end position="38"/>
    </location>
</feature>
<feature type="strand" evidence="9">
    <location>
        <begin position="47"/>
        <end position="56"/>
    </location>
</feature>
<feature type="strand" evidence="9">
    <location>
        <begin position="58"/>
        <end position="71"/>
    </location>
</feature>
<feature type="turn" evidence="9">
    <location>
        <begin position="72"/>
        <end position="74"/>
    </location>
</feature>
<feature type="strand" evidence="9">
    <location>
        <begin position="77"/>
        <end position="87"/>
    </location>
</feature>
<feature type="helix" evidence="9">
    <location>
        <begin position="97"/>
        <end position="114"/>
    </location>
</feature>
<feature type="helix" evidence="9">
    <location>
        <begin position="116"/>
        <end position="118"/>
    </location>
</feature>
<feature type="strand" evidence="9">
    <location>
        <begin position="121"/>
        <end position="127"/>
    </location>
</feature>
<feature type="strand" evidence="9">
    <location>
        <begin position="129"/>
        <end position="132"/>
    </location>
</feature>
<feature type="helix" evidence="9">
    <location>
        <begin position="138"/>
        <end position="146"/>
    </location>
</feature>
<feature type="strand" evidence="9">
    <location>
        <begin position="150"/>
        <end position="156"/>
    </location>
</feature>
<feature type="helix" evidence="11">
    <location>
        <begin position="163"/>
        <end position="165"/>
    </location>
</feature>
<feature type="helix" evidence="9">
    <location>
        <begin position="167"/>
        <end position="174"/>
    </location>
</feature>
<feature type="strand" evidence="9">
    <location>
        <begin position="182"/>
        <end position="186"/>
    </location>
</feature>
<feature type="strand" evidence="9">
    <location>
        <begin position="192"/>
        <end position="197"/>
    </location>
</feature>
<feature type="strand" evidence="9">
    <location>
        <begin position="207"/>
        <end position="215"/>
    </location>
</feature>
<feature type="helix" evidence="9">
    <location>
        <begin position="217"/>
        <end position="226"/>
    </location>
</feature>
<feature type="strand" evidence="9">
    <location>
        <begin position="229"/>
        <end position="232"/>
    </location>
</feature>
<feature type="helix" evidence="9">
    <location>
        <begin position="234"/>
        <end position="245"/>
    </location>
</feature>
<feature type="turn" evidence="10">
    <location>
        <begin position="249"/>
        <end position="251"/>
    </location>
</feature>
<name>ENDOV_MOUSE</name>
<proteinExistence type="evidence at protein level"/>
<gene>
    <name type="primary">Endov</name>
</gene>
<reference key="1">
    <citation type="journal article" date="2003" name="Nucleic Acids Res.">
        <title>Incision at hypoxanthine residues in DNA by a mammalian homologue of the Escherichia coli antimutator enzyme endonuclease V.</title>
        <authorList>
            <person name="Moe A."/>
            <person name="Ringvoll J."/>
            <person name="Nordstrand L.M."/>
            <person name="Eide L."/>
            <person name="Bjoras M."/>
            <person name="Seeberg E."/>
            <person name="Rognes T."/>
            <person name="Klungland A."/>
        </authorList>
    </citation>
    <scope>NUCLEOTIDE SEQUENCE [MRNA] (ISOFORM 1)</scope>
    <scope>COFACTOR</scope>
    <scope>TISSUE SPECIFICITY</scope>
    <scope>MUTAGENESIS OF SER-93 AND GLN-133</scope>
</reference>
<reference key="2">
    <citation type="journal article" date="2005" name="Science">
        <title>The transcriptional landscape of the mammalian genome.</title>
        <authorList>
            <person name="Carninci P."/>
            <person name="Kasukawa T."/>
            <person name="Katayama S."/>
            <person name="Gough J."/>
            <person name="Frith M.C."/>
            <person name="Maeda N."/>
            <person name="Oyama R."/>
            <person name="Ravasi T."/>
            <person name="Lenhard B."/>
            <person name="Wells C."/>
            <person name="Kodzius R."/>
            <person name="Shimokawa K."/>
            <person name="Bajic V.B."/>
            <person name="Brenner S.E."/>
            <person name="Batalov S."/>
            <person name="Forrest A.R."/>
            <person name="Zavolan M."/>
            <person name="Davis M.J."/>
            <person name="Wilming L.G."/>
            <person name="Aidinis V."/>
            <person name="Allen J.E."/>
            <person name="Ambesi-Impiombato A."/>
            <person name="Apweiler R."/>
            <person name="Aturaliya R.N."/>
            <person name="Bailey T.L."/>
            <person name="Bansal M."/>
            <person name="Baxter L."/>
            <person name="Beisel K.W."/>
            <person name="Bersano T."/>
            <person name="Bono H."/>
            <person name="Chalk A.M."/>
            <person name="Chiu K.P."/>
            <person name="Choudhary V."/>
            <person name="Christoffels A."/>
            <person name="Clutterbuck D.R."/>
            <person name="Crowe M.L."/>
            <person name="Dalla E."/>
            <person name="Dalrymple B.P."/>
            <person name="de Bono B."/>
            <person name="Della Gatta G."/>
            <person name="di Bernardo D."/>
            <person name="Down T."/>
            <person name="Engstrom P."/>
            <person name="Fagiolini M."/>
            <person name="Faulkner G."/>
            <person name="Fletcher C.F."/>
            <person name="Fukushima T."/>
            <person name="Furuno M."/>
            <person name="Futaki S."/>
            <person name="Gariboldi M."/>
            <person name="Georgii-Hemming P."/>
            <person name="Gingeras T.R."/>
            <person name="Gojobori T."/>
            <person name="Green R.E."/>
            <person name="Gustincich S."/>
            <person name="Harbers M."/>
            <person name="Hayashi Y."/>
            <person name="Hensch T.K."/>
            <person name="Hirokawa N."/>
            <person name="Hill D."/>
            <person name="Huminiecki L."/>
            <person name="Iacono M."/>
            <person name="Ikeo K."/>
            <person name="Iwama A."/>
            <person name="Ishikawa T."/>
            <person name="Jakt M."/>
            <person name="Kanapin A."/>
            <person name="Katoh M."/>
            <person name="Kawasawa Y."/>
            <person name="Kelso J."/>
            <person name="Kitamura H."/>
            <person name="Kitano H."/>
            <person name="Kollias G."/>
            <person name="Krishnan S.P."/>
            <person name="Kruger A."/>
            <person name="Kummerfeld S.K."/>
            <person name="Kurochkin I.V."/>
            <person name="Lareau L.F."/>
            <person name="Lazarevic D."/>
            <person name="Lipovich L."/>
            <person name="Liu J."/>
            <person name="Liuni S."/>
            <person name="McWilliam S."/>
            <person name="Madan Babu M."/>
            <person name="Madera M."/>
            <person name="Marchionni L."/>
            <person name="Matsuda H."/>
            <person name="Matsuzawa S."/>
            <person name="Miki H."/>
            <person name="Mignone F."/>
            <person name="Miyake S."/>
            <person name="Morris K."/>
            <person name="Mottagui-Tabar S."/>
            <person name="Mulder N."/>
            <person name="Nakano N."/>
            <person name="Nakauchi H."/>
            <person name="Ng P."/>
            <person name="Nilsson R."/>
            <person name="Nishiguchi S."/>
            <person name="Nishikawa S."/>
            <person name="Nori F."/>
            <person name="Ohara O."/>
            <person name="Okazaki Y."/>
            <person name="Orlando V."/>
            <person name="Pang K.C."/>
            <person name="Pavan W.J."/>
            <person name="Pavesi G."/>
            <person name="Pesole G."/>
            <person name="Petrovsky N."/>
            <person name="Piazza S."/>
            <person name="Reed J."/>
            <person name="Reid J.F."/>
            <person name="Ring B.Z."/>
            <person name="Ringwald M."/>
            <person name="Rost B."/>
            <person name="Ruan Y."/>
            <person name="Salzberg S.L."/>
            <person name="Sandelin A."/>
            <person name="Schneider C."/>
            <person name="Schoenbach C."/>
            <person name="Sekiguchi K."/>
            <person name="Semple C.A."/>
            <person name="Seno S."/>
            <person name="Sessa L."/>
            <person name="Sheng Y."/>
            <person name="Shibata Y."/>
            <person name="Shimada H."/>
            <person name="Shimada K."/>
            <person name="Silva D."/>
            <person name="Sinclair B."/>
            <person name="Sperling S."/>
            <person name="Stupka E."/>
            <person name="Sugiura K."/>
            <person name="Sultana R."/>
            <person name="Takenaka Y."/>
            <person name="Taki K."/>
            <person name="Tammoja K."/>
            <person name="Tan S.L."/>
            <person name="Tang S."/>
            <person name="Taylor M.S."/>
            <person name="Tegner J."/>
            <person name="Teichmann S.A."/>
            <person name="Ueda H.R."/>
            <person name="van Nimwegen E."/>
            <person name="Verardo R."/>
            <person name="Wei C.L."/>
            <person name="Yagi K."/>
            <person name="Yamanishi H."/>
            <person name="Zabarovsky E."/>
            <person name="Zhu S."/>
            <person name="Zimmer A."/>
            <person name="Hide W."/>
            <person name="Bult C."/>
            <person name="Grimmond S.M."/>
            <person name="Teasdale R.D."/>
            <person name="Liu E.T."/>
            <person name="Brusic V."/>
            <person name="Quackenbush J."/>
            <person name="Wahlestedt C."/>
            <person name="Mattick J.S."/>
            <person name="Hume D.A."/>
            <person name="Kai C."/>
            <person name="Sasaki D."/>
            <person name="Tomaru Y."/>
            <person name="Fukuda S."/>
            <person name="Kanamori-Katayama M."/>
            <person name="Suzuki M."/>
            <person name="Aoki J."/>
            <person name="Arakawa T."/>
            <person name="Iida J."/>
            <person name="Imamura K."/>
            <person name="Itoh M."/>
            <person name="Kato T."/>
            <person name="Kawaji H."/>
            <person name="Kawagashira N."/>
            <person name="Kawashima T."/>
            <person name="Kojima M."/>
            <person name="Kondo S."/>
            <person name="Konno H."/>
            <person name="Nakano K."/>
            <person name="Ninomiya N."/>
            <person name="Nishio T."/>
            <person name="Okada M."/>
            <person name="Plessy C."/>
            <person name="Shibata K."/>
            <person name="Shiraki T."/>
            <person name="Suzuki S."/>
            <person name="Tagami M."/>
            <person name="Waki K."/>
            <person name="Watahiki A."/>
            <person name="Okamura-Oho Y."/>
            <person name="Suzuki H."/>
            <person name="Kawai J."/>
            <person name="Hayashizaki Y."/>
        </authorList>
    </citation>
    <scope>NUCLEOTIDE SEQUENCE [LARGE SCALE MRNA] (ISOFORM 2)</scope>
    <source>
        <strain>C57BL/6J</strain>
        <strain>NOD</strain>
        <tissue>Cerebellum</tissue>
        <tissue>Heart</tissue>
    </source>
</reference>
<reference key="3">
    <citation type="journal article" date="2009" name="PLoS Biol.">
        <title>Lineage-specific biology revealed by a finished genome assembly of the mouse.</title>
        <authorList>
            <person name="Church D.M."/>
            <person name="Goodstadt L."/>
            <person name="Hillier L.W."/>
            <person name="Zody M.C."/>
            <person name="Goldstein S."/>
            <person name="She X."/>
            <person name="Bult C.J."/>
            <person name="Agarwala R."/>
            <person name="Cherry J.L."/>
            <person name="DiCuccio M."/>
            <person name="Hlavina W."/>
            <person name="Kapustin Y."/>
            <person name="Meric P."/>
            <person name="Maglott D."/>
            <person name="Birtle Z."/>
            <person name="Marques A.C."/>
            <person name="Graves T."/>
            <person name="Zhou S."/>
            <person name="Teague B."/>
            <person name="Potamousis K."/>
            <person name="Churas C."/>
            <person name="Place M."/>
            <person name="Herschleb J."/>
            <person name="Runnheim R."/>
            <person name="Forrest D."/>
            <person name="Amos-Landgraf J."/>
            <person name="Schwartz D.C."/>
            <person name="Cheng Z."/>
            <person name="Lindblad-Toh K."/>
            <person name="Eichler E.E."/>
            <person name="Ponting C.P."/>
        </authorList>
    </citation>
    <scope>NUCLEOTIDE SEQUENCE [LARGE SCALE GENOMIC DNA]</scope>
    <source>
        <strain>C57BL/6J</strain>
    </source>
</reference>
<reference key="4">
    <citation type="submission" date="2005-07" db="EMBL/GenBank/DDBJ databases">
        <authorList>
            <person name="Mural R.J."/>
            <person name="Adams M.D."/>
            <person name="Myers E.W."/>
            <person name="Smith H.O."/>
            <person name="Venter J.C."/>
        </authorList>
    </citation>
    <scope>NUCLEOTIDE SEQUENCE [LARGE SCALE GENOMIC DNA]</scope>
</reference>
<reference key="5">
    <citation type="journal article" date="2004" name="Genome Res.">
        <title>The status, quality, and expansion of the NIH full-length cDNA project: the Mammalian Gene Collection (MGC).</title>
        <authorList>
            <consortium name="The MGC Project Team"/>
        </authorList>
    </citation>
    <scope>NUCLEOTIDE SEQUENCE [LARGE SCALE MRNA] (ISOFORM 2)</scope>
    <source>
        <strain>C57BL/6J</strain>
        <tissue>Brain</tissue>
    </source>
</reference>
<accession>Q8C9A2</accession>
<accession>B1ATE4</accession>
<accession>Q3TCQ4</accession>
<accession>Q8C3Y1</accession>
<evidence type="ECO:0000250" key="1"/>
<evidence type="ECO:0000250" key="2">
    <source>
        <dbReference type="UniProtKB" id="Q8N8Q3"/>
    </source>
</evidence>
<evidence type="ECO:0000256" key="3">
    <source>
        <dbReference type="SAM" id="MobiDB-lite"/>
    </source>
</evidence>
<evidence type="ECO:0000269" key="4">
    <source>
    </source>
</evidence>
<evidence type="ECO:0000303" key="5">
    <source>
    </source>
</evidence>
<evidence type="ECO:0000303" key="6">
    <source>
    </source>
</evidence>
<evidence type="ECO:0000305" key="7"/>
<evidence type="ECO:0000305" key="8">
    <source>
    </source>
</evidence>
<evidence type="ECO:0007829" key="9">
    <source>
        <dbReference type="PDB" id="5AOY"/>
    </source>
</evidence>
<evidence type="ECO:0007829" key="10">
    <source>
        <dbReference type="PDB" id="6OZP"/>
    </source>
</evidence>
<evidence type="ECO:0007829" key="11">
    <source>
        <dbReference type="PDB" id="6OZR"/>
    </source>
</evidence>